<protein>
    <recommendedName>
        <fullName evidence="1">UPF0178 protein IL2341</fullName>
    </recommendedName>
</protein>
<gene>
    <name type="ordered locus">IL2341</name>
</gene>
<keyword id="KW-1185">Reference proteome</keyword>
<comment type="similarity">
    <text evidence="1">Belongs to the UPF0178 family.</text>
</comment>
<accession>Q5QW04</accession>
<evidence type="ECO:0000255" key="1">
    <source>
        <dbReference type="HAMAP-Rule" id="MF_00489"/>
    </source>
</evidence>
<dbReference type="EMBL" id="AE017340">
    <property type="protein sequence ID" value="AAV83173.1"/>
    <property type="molecule type" value="Genomic_DNA"/>
</dbReference>
<dbReference type="RefSeq" id="WP_011235567.1">
    <property type="nucleotide sequence ID" value="NC_006512.1"/>
</dbReference>
<dbReference type="SMR" id="Q5QW04"/>
<dbReference type="STRING" id="283942.IL2341"/>
<dbReference type="GeneID" id="41337536"/>
<dbReference type="KEGG" id="ilo:IL2341"/>
<dbReference type="eggNOG" id="COG1671">
    <property type="taxonomic scope" value="Bacteria"/>
</dbReference>
<dbReference type="HOGENOM" id="CLU_106619_2_1_6"/>
<dbReference type="OrthoDB" id="9798918at2"/>
<dbReference type="Proteomes" id="UP000001171">
    <property type="component" value="Chromosome"/>
</dbReference>
<dbReference type="CDD" id="cd18720">
    <property type="entry name" value="PIN_YqxD-like"/>
    <property type="match status" value="1"/>
</dbReference>
<dbReference type="HAMAP" id="MF_00489">
    <property type="entry name" value="UPF0178"/>
    <property type="match status" value="1"/>
</dbReference>
<dbReference type="InterPro" id="IPR003791">
    <property type="entry name" value="UPF0178"/>
</dbReference>
<dbReference type="NCBIfam" id="NF001095">
    <property type="entry name" value="PRK00124.1"/>
    <property type="match status" value="1"/>
</dbReference>
<dbReference type="PANTHER" id="PTHR35146">
    <property type="entry name" value="UPF0178 PROTEIN YAII"/>
    <property type="match status" value="1"/>
</dbReference>
<dbReference type="PANTHER" id="PTHR35146:SF1">
    <property type="entry name" value="UPF0178 PROTEIN YAII"/>
    <property type="match status" value="1"/>
</dbReference>
<dbReference type="Pfam" id="PF02639">
    <property type="entry name" value="DUF188"/>
    <property type="match status" value="1"/>
</dbReference>
<organism>
    <name type="scientific">Idiomarina loihiensis (strain ATCC BAA-735 / DSM 15497 / L2-TR)</name>
    <dbReference type="NCBI Taxonomy" id="283942"/>
    <lineage>
        <taxon>Bacteria</taxon>
        <taxon>Pseudomonadati</taxon>
        <taxon>Pseudomonadota</taxon>
        <taxon>Gammaproteobacteria</taxon>
        <taxon>Alteromonadales</taxon>
        <taxon>Idiomarinaceae</taxon>
        <taxon>Idiomarina</taxon>
    </lineage>
</organism>
<feature type="chain" id="PRO_0000175984" description="UPF0178 protein IL2341">
    <location>
        <begin position="1"/>
        <end position="147"/>
    </location>
</feature>
<name>Y2341_IDILO</name>
<proteinExistence type="inferred from homology"/>
<sequence>MTLFIDADACPVAIREILFRAAQRKQLHLYLVANQRIQTPKSKFIHMVQVGSGFDVADHEIVRRCEADDLIITSDIPLASEVIDKGAKALSPRGELFTPDNIRQRLNIRDFMDTMRSSGIQSGGPPPLSNVDRKNFADHLDRLLAGS</sequence>
<reference key="1">
    <citation type="journal article" date="2004" name="Proc. Natl. Acad. Sci. U.S.A.">
        <title>Genome sequence of the deep-sea gamma-proteobacterium Idiomarina loihiensis reveals amino acid fermentation as a source of carbon and energy.</title>
        <authorList>
            <person name="Hou S."/>
            <person name="Saw J.H."/>
            <person name="Lee K.S."/>
            <person name="Freitas T.A."/>
            <person name="Belisle C."/>
            <person name="Kawarabayasi Y."/>
            <person name="Donachie S.P."/>
            <person name="Pikina A."/>
            <person name="Galperin M.Y."/>
            <person name="Koonin E.V."/>
            <person name="Makarova K.S."/>
            <person name="Omelchenko M.V."/>
            <person name="Sorokin A."/>
            <person name="Wolf Y.I."/>
            <person name="Li Q.X."/>
            <person name="Keum Y.S."/>
            <person name="Campbell S."/>
            <person name="Denery J."/>
            <person name="Aizawa S."/>
            <person name="Shibata S."/>
            <person name="Malahoff A."/>
            <person name="Alam M."/>
        </authorList>
    </citation>
    <scope>NUCLEOTIDE SEQUENCE [LARGE SCALE GENOMIC DNA]</scope>
    <source>
        <strain>ATCC BAA-735 / DSM 15497 / L2-TR</strain>
    </source>
</reference>